<accession>P61022</accession>
<accession>Q62877</accession>
<accession>Q6ZWQ8</accession>
<proteinExistence type="evidence at protein level"/>
<gene>
    <name type="primary">Chp1</name>
    <name type="synonym">Chp</name>
    <name type="synonym">Sid470</name>
</gene>
<reference key="1">
    <citation type="submission" date="1999-03" db="EMBL/GenBank/DDBJ databases">
        <title>Mouse calcium binding protein p22.</title>
        <authorList>
            <person name="Seki N."/>
            <person name="Hattori A."/>
            <person name="Hayashi A."/>
            <person name="Kozuma S."/>
            <person name="Muramatsu M."/>
            <person name="Saito T."/>
        </authorList>
    </citation>
    <scope>NUCLEOTIDE SEQUENCE [MRNA]</scope>
</reference>
<reference key="2">
    <citation type="journal article" date="2005" name="Science">
        <title>The transcriptional landscape of the mammalian genome.</title>
        <authorList>
            <person name="Carninci P."/>
            <person name="Kasukawa T."/>
            <person name="Katayama S."/>
            <person name="Gough J."/>
            <person name="Frith M.C."/>
            <person name="Maeda N."/>
            <person name="Oyama R."/>
            <person name="Ravasi T."/>
            <person name="Lenhard B."/>
            <person name="Wells C."/>
            <person name="Kodzius R."/>
            <person name="Shimokawa K."/>
            <person name="Bajic V.B."/>
            <person name="Brenner S.E."/>
            <person name="Batalov S."/>
            <person name="Forrest A.R."/>
            <person name="Zavolan M."/>
            <person name="Davis M.J."/>
            <person name="Wilming L.G."/>
            <person name="Aidinis V."/>
            <person name="Allen J.E."/>
            <person name="Ambesi-Impiombato A."/>
            <person name="Apweiler R."/>
            <person name="Aturaliya R.N."/>
            <person name="Bailey T.L."/>
            <person name="Bansal M."/>
            <person name="Baxter L."/>
            <person name="Beisel K.W."/>
            <person name="Bersano T."/>
            <person name="Bono H."/>
            <person name="Chalk A.M."/>
            <person name="Chiu K.P."/>
            <person name="Choudhary V."/>
            <person name="Christoffels A."/>
            <person name="Clutterbuck D.R."/>
            <person name="Crowe M.L."/>
            <person name="Dalla E."/>
            <person name="Dalrymple B.P."/>
            <person name="de Bono B."/>
            <person name="Della Gatta G."/>
            <person name="di Bernardo D."/>
            <person name="Down T."/>
            <person name="Engstrom P."/>
            <person name="Fagiolini M."/>
            <person name="Faulkner G."/>
            <person name="Fletcher C.F."/>
            <person name="Fukushima T."/>
            <person name="Furuno M."/>
            <person name="Futaki S."/>
            <person name="Gariboldi M."/>
            <person name="Georgii-Hemming P."/>
            <person name="Gingeras T.R."/>
            <person name="Gojobori T."/>
            <person name="Green R.E."/>
            <person name="Gustincich S."/>
            <person name="Harbers M."/>
            <person name="Hayashi Y."/>
            <person name="Hensch T.K."/>
            <person name="Hirokawa N."/>
            <person name="Hill D."/>
            <person name="Huminiecki L."/>
            <person name="Iacono M."/>
            <person name="Ikeo K."/>
            <person name="Iwama A."/>
            <person name="Ishikawa T."/>
            <person name="Jakt M."/>
            <person name="Kanapin A."/>
            <person name="Katoh M."/>
            <person name="Kawasawa Y."/>
            <person name="Kelso J."/>
            <person name="Kitamura H."/>
            <person name="Kitano H."/>
            <person name="Kollias G."/>
            <person name="Krishnan S.P."/>
            <person name="Kruger A."/>
            <person name="Kummerfeld S.K."/>
            <person name="Kurochkin I.V."/>
            <person name="Lareau L.F."/>
            <person name="Lazarevic D."/>
            <person name="Lipovich L."/>
            <person name="Liu J."/>
            <person name="Liuni S."/>
            <person name="McWilliam S."/>
            <person name="Madan Babu M."/>
            <person name="Madera M."/>
            <person name="Marchionni L."/>
            <person name="Matsuda H."/>
            <person name="Matsuzawa S."/>
            <person name="Miki H."/>
            <person name="Mignone F."/>
            <person name="Miyake S."/>
            <person name="Morris K."/>
            <person name="Mottagui-Tabar S."/>
            <person name="Mulder N."/>
            <person name="Nakano N."/>
            <person name="Nakauchi H."/>
            <person name="Ng P."/>
            <person name="Nilsson R."/>
            <person name="Nishiguchi S."/>
            <person name="Nishikawa S."/>
            <person name="Nori F."/>
            <person name="Ohara O."/>
            <person name="Okazaki Y."/>
            <person name="Orlando V."/>
            <person name="Pang K.C."/>
            <person name="Pavan W.J."/>
            <person name="Pavesi G."/>
            <person name="Pesole G."/>
            <person name="Petrovsky N."/>
            <person name="Piazza S."/>
            <person name="Reed J."/>
            <person name="Reid J.F."/>
            <person name="Ring B.Z."/>
            <person name="Ringwald M."/>
            <person name="Rost B."/>
            <person name="Ruan Y."/>
            <person name="Salzberg S.L."/>
            <person name="Sandelin A."/>
            <person name="Schneider C."/>
            <person name="Schoenbach C."/>
            <person name="Sekiguchi K."/>
            <person name="Semple C.A."/>
            <person name="Seno S."/>
            <person name="Sessa L."/>
            <person name="Sheng Y."/>
            <person name="Shibata Y."/>
            <person name="Shimada H."/>
            <person name="Shimada K."/>
            <person name="Silva D."/>
            <person name="Sinclair B."/>
            <person name="Sperling S."/>
            <person name="Stupka E."/>
            <person name="Sugiura K."/>
            <person name="Sultana R."/>
            <person name="Takenaka Y."/>
            <person name="Taki K."/>
            <person name="Tammoja K."/>
            <person name="Tan S.L."/>
            <person name="Tang S."/>
            <person name="Taylor M.S."/>
            <person name="Tegner J."/>
            <person name="Teichmann S.A."/>
            <person name="Ueda H.R."/>
            <person name="van Nimwegen E."/>
            <person name="Verardo R."/>
            <person name="Wei C.L."/>
            <person name="Yagi K."/>
            <person name="Yamanishi H."/>
            <person name="Zabarovsky E."/>
            <person name="Zhu S."/>
            <person name="Zimmer A."/>
            <person name="Hide W."/>
            <person name="Bult C."/>
            <person name="Grimmond S.M."/>
            <person name="Teasdale R.D."/>
            <person name="Liu E.T."/>
            <person name="Brusic V."/>
            <person name="Quackenbush J."/>
            <person name="Wahlestedt C."/>
            <person name="Mattick J.S."/>
            <person name="Hume D.A."/>
            <person name="Kai C."/>
            <person name="Sasaki D."/>
            <person name="Tomaru Y."/>
            <person name="Fukuda S."/>
            <person name="Kanamori-Katayama M."/>
            <person name="Suzuki M."/>
            <person name="Aoki J."/>
            <person name="Arakawa T."/>
            <person name="Iida J."/>
            <person name="Imamura K."/>
            <person name="Itoh M."/>
            <person name="Kato T."/>
            <person name="Kawaji H."/>
            <person name="Kawagashira N."/>
            <person name="Kawashima T."/>
            <person name="Kojima M."/>
            <person name="Kondo S."/>
            <person name="Konno H."/>
            <person name="Nakano K."/>
            <person name="Ninomiya N."/>
            <person name="Nishio T."/>
            <person name="Okada M."/>
            <person name="Plessy C."/>
            <person name="Shibata K."/>
            <person name="Shiraki T."/>
            <person name="Suzuki S."/>
            <person name="Tagami M."/>
            <person name="Waki K."/>
            <person name="Watahiki A."/>
            <person name="Okamura-Oho Y."/>
            <person name="Suzuki H."/>
            <person name="Kawai J."/>
            <person name="Hayashizaki Y."/>
        </authorList>
    </citation>
    <scope>NUCLEOTIDE SEQUENCE [LARGE SCALE MRNA]</scope>
    <source>
        <strain>BALB/cJ</strain>
        <strain>C57BL/6J</strain>
        <strain>NOD</strain>
        <tissue>Corpora quadrigemina</tissue>
        <tissue>Liver</tissue>
        <tissue>Mammary gland</tissue>
        <tissue>Placenta</tissue>
        <tissue>Spleen</tissue>
    </source>
</reference>
<reference key="3">
    <citation type="journal article" date="2004" name="Genome Res.">
        <title>The status, quality, and expansion of the NIH full-length cDNA project: the Mammalian Gene Collection (MGC).</title>
        <authorList>
            <consortium name="The MGC Project Team"/>
        </authorList>
    </citation>
    <scope>NUCLEOTIDE SEQUENCE [LARGE SCALE MRNA]</scope>
    <source>
        <strain>C57BL/6J</strain>
        <tissue>Corpora quadrigemina</tissue>
    </source>
</reference>
<reference key="4">
    <citation type="journal article" date="1996" name="Am. J. Physiol.">
        <title>Coimmunoprecipitation of a 24-kDa protein with NHE1, the ubiquitous isoform of the Na+/H+ exchanger.</title>
        <authorList>
            <person name="Goss G."/>
            <person name="Orlowski J."/>
            <person name="Grinstein S."/>
        </authorList>
    </citation>
    <scope>INTERACTION WITH SLC9A1</scope>
</reference>
<reference key="5">
    <citation type="journal article" date="2010" name="Cell">
        <title>A tissue-specific atlas of mouse protein phosphorylation and expression.</title>
        <authorList>
            <person name="Huttlin E.L."/>
            <person name="Jedrychowski M.P."/>
            <person name="Elias J.E."/>
            <person name="Goswami T."/>
            <person name="Rad R."/>
            <person name="Beausoleil S.A."/>
            <person name="Villen J."/>
            <person name="Haas W."/>
            <person name="Sowa M.E."/>
            <person name="Gygi S.P."/>
        </authorList>
    </citation>
    <scope>IDENTIFICATION BY MASS SPECTROMETRY [LARGE SCALE ANALYSIS]</scope>
    <source>
        <tissue>Brain</tissue>
        <tissue>Brown adipose tissue</tissue>
        <tissue>Heart</tissue>
        <tissue>Kidney</tissue>
        <tissue>Liver</tissue>
        <tissue>Lung</tissue>
        <tissue>Pancreas</tissue>
        <tissue>Spleen</tissue>
        <tissue>Testis</tissue>
    </source>
</reference>
<protein>
    <recommendedName>
        <fullName>Calcineurin B homologous protein 1</fullName>
    </recommendedName>
    <alternativeName>
        <fullName>Calcineurin B-like protein</fullName>
    </alternativeName>
    <alternativeName>
        <fullName>Calcium-binding protein CHP</fullName>
    </alternativeName>
    <alternativeName>
        <fullName>Calcium-binding protein p22</fullName>
    </alternativeName>
    <alternativeName>
        <fullName>EF-hand calcium-binding domain-containing protein p22</fullName>
    </alternativeName>
    <alternativeName>
        <fullName>Sid 470</fullName>
    </alternativeName>
    <alternativeName>
        <fullName>p24</fullName>
    </alternativeName>
</protein>
<feature type="initiator methionine" description="Removed" evidence="3">
    <location>
        <position position="1"/>
    </location>
</feature>
<feature type="chain" id="PRO_0000073844" description="Calcineurin B homologous protein 1">
    <location>
        <begin position="2"/>
        <end position="195"/>
    </location>
</feature>
<feature type="domain" description="EF-hand 1" evidence="4">
    <location>
        <begin position="26"/>
        <end position="61"/>
    </location>
</feature>
<feature type="domain" description="EF-hand 2" evidence="6">
    <location>
        <begin position="71"/>
        <end position="106"/>
    </location>
</feature>
<feature type="domain" description="EF-hand 3" evidence="4">
    <location>
        <begin position="110"/>
        <end position="145"/>
    </location>
</feature>
<feature type="domain" description="EF-hand 4" evidence="4">
    <location>
        <begin position="151"/>
        <end position="186"/>
    </location>
</feature>
<feature type="short sequence motif" description="Necessary for association with microtubule and interaction with GAPDH" evidence="1">
    <location>
        <begin position="2"/>
        <end position="6"/>
    </location>
</feature>
<feature type="short sequence motif" description="Nuclear export signal 1" evidence="1">
    <location>
        <begin position="138"/>
        <end position="147"/>
    </location>
</feature>
<feature type="short sequence motif" description="Nuclear export signal 2" evidence="1">
    <location>
        <begin position="176"/>
        <end position="185"/>
    </location>
</feature>
<feature type="binding site" evidence="4">
    <location>
        <position position="123"/>
    </location>
    <ligand>
        <name>Ca(2+)</name>
        <dbReference type="ChEBI" id="CHEBI:29108"/>
        <label>2</label>
    </ligand>
</feature>
<feature type="binding site" evidence="4">
    <location>
        <position position="125"/>
    </location>
    <ligand>
        <name>Ca(2+)</name>
        <dbReference type="ChEBI" id="CHEBI:29108"/>
        <label>1</label>
    </ligand>
</feature>
<feature type="binding site" evidence="4">
    <location>
        <position position="127"/>
    </location>
    <ligand>
        <name>Ca(2+)</name>
        <dbReference type="ChEBI" id="CHEBI:29108"/>
        <label>1</label>
    </ligand>
</feature>
<feature type="binding site" evidence="4">
    <location>
        <position position="129"/>
    </location>
    <ligand>
        <name>Ca(2+)</name>
        <dbReference type="ChEBI" id="CHEBI:29108"/>
        <label>1</label>
    </ligand>
</feature>
<feature type="binding site" evidence="4">
    <location>
        <position position="134"/>
    </location>
    <ligand>
        <name>Ca(2+)</name>
        <dbReference type="ChEBI" id="CHEBI:29108"/>
        <label>1</label>
    </ligand>
</feature>
<feature type="binding site" evidence="6">
    <location>
        <position position="164"/>
    </location>
    <ligand>
        <name>Ca(2+)</name>
        <dbReference type="ChEBI" id="CHEBI:29108"/>
        <label>2</label>
    </ligand>
</feature>
<feature type="binding site" evidence="6">
    <location>
        <position position="166"/>
    </location>
    <ligand>
        <name>Ca(2+)</name>
        <dbReference type="ChEBI" id="CHEBI:29108"/>
        <label>2</label>
    </ligand>
</feature>
<feature type="binding site" evidence="6">
    <location>
        <position position="168"/>
    </location>
    <ligand>
        <name>Ca(2+)</name>
        <dbReference type="ChEBI" id="CHEBI:29108"/>
        <label>2</label>
    </ligand>
</feature>
<feature type="binding site" evidence="6">
    <location>
        <position position="175"/>
    </location>
    <ligand>
        <name>Ca(2+)</name>
        <dbReference type="ChEBI" id="CHEBI:29108"/>
        <label>2</label>
    </ligand>
</feature>
<feature type="lipid moiety-binding region" description="N-myristoyl glycine" evidence="3">
    <location>
        <position position="2"/>
    </location>
</feature>
<comment type="function">
    <text evidence="3">Calcium-binding protein involved in different processes such as regulation of vesicular trafficking, plasma membrane Na(+)/H(+) exchanger and gene transcription. Involved in the constitutive exocytic membrane traffic. Mediates the association between microtubules and membrane-bound organelles of the endoplasmic reticulum and Golgi apparatus and is also required for the targeting and fusion of transcytotic vesicles (TCV) with the plasma membrane. Functions as an integral cofactor in cell pH regulation by controlling plasma membrane-type Na(+)/H(+) exchange activity. Affects the pH sensitivity of SLC9A1/NHE1 by increasing its sensitivity at acidic pH. Required for the stabilization and localization of SLC9A1/NHE1 at the plasma membranes. Inhibits serum- and GTPase-stimulated Na(+)/H(+) exchange. Plays a role as an inhibitor of ribosomal RNA transcription by repressing the nucleolar UBF1 transcriptional activity. May sequester UBF1 in the nucleoplasm and limit its translocation to the nucleolus. Associates to the ribosomal gene promoter. Acts as a negative regulator of the calcineurin/NFAT signaling pathway. Inhibits NFAT nuclear translocation and transcriptional activity by suppressing the calcium-dependent calcineurin phosphatase activity. Also negatively regulates the kinase activity of the apoptosis-induced kinase STK17B. Inhibits both STK17B auto- and substrate-phosphorylations in a calcium-dependent manner (By similarity).</text>
</comment>
<comment type="subunit">
    <text evidence="3 5">Monomer. Interacts with STK17B; the interaction occurs in a calcium-independent manner and induces the translocation of CHP1 from the Golgi to the nucleus. Interacts with GAPDH; the interaction is direct, occurs in a N-myristoylation-dependent manner and facilitates the ability of CHP1 to bind microtubules. Interacts with KIF1B (via the C-terminal end of the kinesin-motor domain); the interaction occurs in a calcium-dependent manner. Associates (via C-terminal domain) with microtubules; the association occurs with polymerized microtubules during the cell cycle in a myristoylation- and calcium-independent manner and is enhanced by GAPDH. Interacts with PPP3CA. Interacts with SLC9A1/NHE1 (via the cytoplasmic C-terminal domain); the interaction occurs at the plasma membrane in a calcium-dependent manner and at a domain that is critical for growth factor stimulation of the exchanger (By similarity). Interacts with SLC9A3; increases SLC9A3 trafficking and activity at the plasma membrane (By similarity).</text>
</comment>
<comment type="subcellular location">
    <subcellularLocation>
        <location evidence="2">Nucleus</location>
    </subcellularLocation>
    <subcellularLocation>
        <location evidence="2">Cytoplasm</location>
    </subcellularLocation>
    <subcellularLocation>
        <location evidence="2">Cytoplasm</location>
        <location evidence="2">Cytoskeleton</location>
    </subcellularLocation>
    <subcellularLocation>
        <location evidence="2">Endomembrane system</location>
    </subcellularLocation>
    <subcellularLocation>
        <location evidence="2">Endoplasmic reticulum-Golgi intermediate compartment</location>
    </subcellularLocation>
    <subcellularLocation>
        <location evidence="2">Endoplasmic reticulum</location>
    </subcellularLocation>
    <subcellularLocation>
        <location evidence="2">Cell membrane</location>
    </subcellularLocation>
    <subcellularLocation>
        <location evidence="3">Membrane</location>
        <topology evidence="3">Lipid-anchor</topology>
    </subcellularLocation>
    <text evidence="2">Localizes in cytoplasmic compartments in dividing cells. Localizes in the nucleus in quiescent cells. Exported from the nucleus to the cytoplasm through a nuclear export signal (NES) and CRM1-dependent pathway. May shuttle between nucleus and cytoplasm. Localizes with the microtubule-organizing center (MTOC) and extends toward the periphery along microtubules. Associates with membranes of the early secretory pathway in a GAPDH-independent, N-myristoylation- and calcium-dependent manner. Colocalizes with the mitotic spindle microtubules. Colocalizes with GAPDH along microtubules. Colocalizes with SLC9A1 at the endoplasmic reticulum and plasma membrane. Colocalizes with STK17B at the plasma membrane.</text>
</comment>
<comment type="PTM">
    <text evidence="1">Phosphorylated; decreased phosphorylation is associated with an increase in SLC9A1/NHE1 Na(+)/H(+) exchange activity. Phosphorylation occurs in serum-dependent manner. The phosphorylation state may regulate the binding to SLC9A1/NHE1 (By similarity).</text>
</comment>
<comment type="PTM">
    <text evidence="1">Both N-myristoylation and calcium-mediated conformational changes are essential for its function in exocytic traffic. N-myristoylation is required for its association with microtubules and interaction with GAPDH, but not for the constitutive association to membranes (By similarity).</text>
</comment>
<comment type="similarity">
    <text evidence="6">Belongs to the calcineurin regulatory subunit family. CHP subfamily.</text>
</comment>
<dbReference type="EMBL" id="AB025217">
    <property type="protein sequence ID" value="BAA84688.1"/>
    <property type="molecule type" value="mRNA"/>
</dbReference>
<dbReference type="EMBL" id="AK005067">
    <property type="protein sequence ID" value="BAB23791.1"/>
    <property type="molecule type" value="mRNA"/>
</dbReference>
<dbReference type="EMBL" id="AK045920">
    <property type="protein sequence ID" value="BAC32532.1"/>
    <property type="molecule type" value="mRNA"/>
</dbReference>
<dbReference type="EMBL" id="AK156588">
    <property type="protein sequence ID" value="BAE33769.1"/>
    <property type="molecule type" value="mRNA"/>
</dbReference>
<dbReference type="EMBL" id="AK166219">
    <property type="protein sequence ID" value="BAE38637.1"/>
    <property type="molecule type" value="mRNA"/>
</dbReference>
<dbReference type="EMBL" id="AK167179">
    <property type="protein sequence ID" value="BAE39314.1"/>
    <property type="molecule type" value="mRNA"/>
</dbReference>
<dbReference type="EMBL" id="AK167720">
    <property type="protein sequence ID" value="BAE39762.1"/>
    <property type="molecule type" value="mRNA"/>
</dbReference>
<dbReference type="EMBL" id="AK168284">
    <property type="protein sequence ID" value="BAE40230.1"/>
    <property type="molecule type" value="mRNA"/>
</dbReference>
<dbReference type="EMBL" id="AK169146">
    <property type="protein sequence ID" value="BAE40925.1"/>
    <property type="molecule type" value="mRNA"/>
</dbReference>
<dbReference type="EMBL" id="BC054733">
    <property type="protein sequence ID" value="AAH54733.1"/>
    <property type="molecule type" value="mRNA"/>
</dbReference>
<dbReference type="EMBL" id="BC064784">
    <property type="protein sequence ID" value="AAH64784.1"/>
    <property type="molecule type" value="mRNA"/>
</dbReference>
<dbReference type="CCDS" id="CCDS16604.1"/>
<dbReference type="RefSeq" id="NP_062743.1">
    <property type="nucleotide sequence ID" value="NM_019769.3"/>
</dbReference>
<dbReference type="SMR" id="P61022"/>
<dbReference type="BioGRID" id="207952">
    <property type="interactions" value="8"/>
</dbReference>
<dbReference type="FunCoup" id="P61022">
    <property type="interactions" value="2580"/>
</dbReference>
<dbReference type="STRING" id="10090.ENSMUSP00000014221"/>
<dbReference type="GlyGen" id="P61022">
    <property type="glycosylation" value="1 site, 1 N-linked glycan (1 site)"/>
</dbReference>
<dbReference type="iPTMnet" id="P61022"/>
<dbReference type="PhosphoSitePlus" id="P61022"/>
<dbReference type="jPOST" id="P61022"/>
<dbReference type="PaxDb" id="10090-ENSMUSP00000014221"/>
<dbReference type="PeptideAtlas" id="P61022"/>
<dbReference type="ProteomicsDB" id="281671"/>
<dbReference type="Pumba" id="P61022"/>
<dbReference type="Antibodypedia" id="1886">
    <property type="antibodies" value="242 antibodies from 26 providers"/>
</dbReference>
<dbReference type="Ensembl" id="ENSMUST00000014221.13">
    <property type="protein sequence ID" value="ENSMUSP00000014221.7"/>
    <property type="gene ID" value="ENSMUSG00000014077.14"/>
</dbReference>
<dbReference type="GeneID" id="56398"/>
<dbReference type="KEGG" id="mmu:56398"/>
<dbReference type="UCSC" id="uc008ltw.1">
    <property type="organism name" value="mouse"/>
</dbReference>
<dbReference type="AGR" id="MGI:1927185"/>
<dbReference type="CTD" id="11261"/>
<dbReference type="MGI" id="MGI:1927185">
    <property type="gene designation" value="Chp1"/>
</dbReference>
<dbReference type="VEuPathDB" id="HostDB:ENSMUSG00000014077"/>
<dbReference type="eggNOG" id="KOG0034">
    <property type="taxonomic scope" value="Eukaryota"/>
</dbReference>
<dbReference type="GeneTree" id="ENSGT00940000154629"/>
<dbReference type="HOGENOM" id="CLU_061288_10_5_1"/>
<dbReference type="InParanoid" id="P61022"/>
<dbReference type="OMA" id="LKFAFRM"/>
<dbReference type="OrthoDB" id="191686at2759"/>
<dbReference type="PhylomeDB" id="P61022"/>
<dbReference type="TreeFam" id="TF354284"/>
<dbReference type="Reactome" id="R-MMU-2160916">
    <property type="pathway name" value="Hyaluronan uptake and degradation"/>
</dbReference>
<dbReference type="BioGRID-ORCS" id="56398">
    <property type="hits" value="18 hits in 81 CRISPR screens"/>
</dbReference>
<dbReference type="ChiTaRS" id="Chp1">
    <property type="organism name" value="mouse"/>
</dbReference>
<dbReference type="PRO" id="PR:P61022"/>
<dbReference type="Proteomes" id="UP000000589">
    <property type="component" value="Chromosome 2"/>
</dbReference>
<dbReference type="RNAct" id="P61022">
    <property type="molecule type" value="protein"/>
</dbReference>
<dbReference type="Bgee" id="ENSMUSG00000014077">
    <property type="expression patterns" value="Expressed in seminal vesicle and 262 other cell types or tissues"/>
</dbReference>
<dbReference type="ExpressionAtlas" id="P61022">
    <property type="expression patterns" value="baseline and differential"/>
</dbReference>
<dbReference type="GO" id="GO:0005737">
    <property type="term" value="C:cytoplasm"/>
    <property type="evidence" value="ECO:0000250"/>
    <property type="project" value="UniProtKB"/>
</dbReference>
<dbReference type="GO" id="GO:0005783">
    <property type="term" value="C:endoplasmic reticulum"/>
    <property type="evidence" value="ECO:0000250"/>
    <property type="project" value="UniProtKB"/>
</dbReference>
<dbReference type="GO" id="GO:0005793">
    <property type="term" value="C:endoplasmic reticulum-Golgi intermediate compartment"/>
    <property type="evidence" value="ECO:0007669"/>
    <property type="project" value="UniProtKB-SubCell"/>
</dbReference>
<dbReference type="GO" id="GO:0000139">
    <property type="term" value="C:Golgi membrane"/>
    <property type="evidence" value="ECO:0000250"/>
    <property type="project" value="UniProtKB"/>
</dbReference>
<dbReference type="GO" id="GO:0045121">
    <property type="term" value="C:membrane raft"/>
    <property type="evidence" value="ECO:0000353"/>
    <property type="project" value="MGI"/>
</dbReference>
<dbReference type="GO" id="GO:0015630">
    <property type="term" value="C:microtubule cytoskeleton"/>
    <property type="evidence" value="ECO:0000250"/>
    <property type="project" value="UniProtKB"/>
</dbReference>
<dbReference type="GO" id="GO:0005634">
    <property type="term" value="C:nucleus"/>
    <property type="evidence" value="ECO:0000250"/>
    <property type="project" value="UniProtKB"/>
</dbReference>
<dbReference type="GO" id="GO:0005886">
    <property type="term" value="C:plasma membrane"/>
    <property type="evidence" value="ECO:0000250"/>
    <property type="project" value="UniProtKB"/>
</dbReference>
<dbReference type="GO" id="GO:0030133">
    <property type="term" value="C:transport vesicle"/>
    <property type="evidence" value="ECO:0000250"/>
    <property type="project" value="UniProtKB"/>
</dbReference>
<dbReference type="GO" id="GO:1990351">
    <property type="term" value="C:transporter complex"/>
    <property type="evidence" value="ECO:0000314"/>
    <property type="project" value="MGI"/>
</dbReference>
<dbReference type="GO" id="GO:0005509">
    <property type="term" value="F:calcium ion binding"/>
    <property type="evidence" value="ECO:0000250"/>
    <property type="project" value="UniProtKB"/>
</dbReference>
<dbReference type="GO" id="GO:0048306">
    <property type="term" value="F:calcium-dependent protein binding"/>
    <property type="evidence" value="ECO:0000250"/>
    <property type="project" value="UniProtKB"/>
</dbReference>
<dbReference type="GO" id="GO:0019900">
    <property type="term" value="F:kinase binding"/>
    <property type="evidence" value="ECO:0000250"/>
    <property type="project" value="UniProtKB"/>
</dbReference>
<dbReference type="GO" id="GO:0008017">
    <property type="term" value="F:microtubule binding"/>
    <property type="evidence" value="ECO:0000250"/>
    <property type="project" value="UniProtKB"/>
</dbReference>
<dbReference type="GO" id="GO:0004860">
    <property type="term" value="F:protein kinase inhibitor activity"/>
    <property type="evidence" value="ECO:0007669"/>
    <property type="project" value="UniProtKB-KW"/>
</dbReference>
<dbReference type="GO" id="GO:0015385">
    <property type="term" value="F:sodium:proton antiporter activity"/>
    <property type="evidence" value="ECO:0000315"/>
    <property type="project" value="MGI"/>
</dbReference>
<dbReference type="GO" id="GO:0071468">
    <property type="term" value="P:cellular response to acidic pH"/>
    <property type="evidence" value="ECO:0000250"/>
    <property type="project" value="UniProtKB"/>
</dbReference>
<dbReference type="GO" id="GO:0031122">
    <property type="term" value="P:cytoplasmic microtubule organization"/>
    <property type="evidence" value="ECO:0000250"/>
    <property type="project" value="UniProtKB"/>
</dbReference>
<dbReference type="GO" id="GO:0022406">
    <property type="term" value="P:membrane docking"/>
    <property type="evidence" value="ECO:0000250"/>
    <property type="project" value="UniProtKB"/>
</dbReference>
<dbReference type="GO" id="GO:0061025">
    <property type="term" value="P:membrane fusion"/>
    <property type="evidence" value="ECO:0000250"/>
    <property type="project" value="UniProtKB"/>
</dbReference>
<dbReference type="GO" id="GO:0061024">
    <property type="term" value="P:membrane organization"/>
    <property type="evidence" value="ECO:0000250"/>
    <property type="project" value="UniProtKB"/>
</dbReference>
<dbReference type="GO" id="GO:0001578">
    <property type="term" value="P:microtubule bundle formation"/>
    <property type="evidence" value="ECO:0000250"/>
    <property type="project" value="UniProtKB"/>
</dbReference>
<dbReference type="GO" id="GO:0070885">
    <property type="term" value="P:negative regulation of calcineurin-NFAT signaling cascade"/>
    <property type="evidence" value="ECO:0000250"/>
    <property type="project" value="UniProtKB"/>
</dbReference>
<dbReference type="GO" id="GO:0032088">
    <property type="term" value="P:negative regulation of NF-kappaB transcription factor activity"/>
    <property type="evidence" value="ECO:0000250"/>
    <property type="project" value="UniProtKB"/>
</dbReference>
<dbReference type="GO" id="GO:0010923">
    <property type="term" value="P:negative regulation of phosphatase activity"/>
    <property type="evidence" value="ECO:0000250"/>
    <property type="project" value="UniProtKB"/>
</dbReference>
<dbReference type="GO" id="GO:0031953">
    <property type="term" value="P:negative regulation of protein autophosphorylation"/>
    <property type="evidence" value="ECO:0000250"/>
    <property type="project" value="UniProtKB"/>
</dbReference>
<dbReference type="GO" id="GO:0042308">
    <property type="term" value="P:negative regulation of protein import into nucleus"/>
    <property type="evidence" value="ECO:0000250"/>
    <property type="project" value="UniProtKB"/>
</dbReference>
<dbReference type="GO" id="GO:0006469">
    <property type="term" value="P:negative regulation of protein kinase activity"/>
    <property type="evidence" value="ECO:0000250"/>
    <property type="project" value="UniProtKB"/>
</dbReference>
<dbReference type="GO" id="GO:0001933">
    <property type="term" value="P:negative regulation of protein phosphorylation"/>
    <property type="evidence" value="ECO:0000250"/>
    <property type="project" value="UniProtKB"/>
</dbReference>
<dbReference type="GO" id="GO:0031397">
    <property type="term" value="P:negative regulation of protein ubiquitination"/>
    <property type="evidence" value="ECO:0000250"/>
    <property type="project" value="UniProtKB"/>
</dbReference>
<dbReference type="GO" id="GO:0071073">
    <property type="term" value="P:positive regulation of phospholipid biosynthetic process"/>
    <property type="evidence" value="ECO:0007669"/>
    <property type="project" value="Ensembl"/>
</dbReference>
<dbReference type="GO" id="GO:0060050">
    <property type="term" value="P:positive regulation of protein glycosylation"/>
    <property type="evidence" value="ECO:0000250"/>
    <property type="project" value="UniProtKB"/>
</dbReference>
<dbReference type="GO" id="GO:0090314">
    <property type="term" value="P:positive regulation of protein targeting to membrane"/>
    <property type="evidence" value="ECO:0000250"/>
    <property type="project" value="UniProtKB"/>
</dbReference>
<dbReference type="GO" id="GO:0051222">
    <property type="term" value="P:positive regulation of protein transport"/>
    <property type="evidence" value="ECO:0000250"/>
    <property type="project" value="UniProtKB"/>
</dbReference>
<dbReference type="GO" id="GO:0032417">
    <property type="term" value="P:positive regulation of sodium:proton antiporter activity"/>
    <property type="evidence" value="ECO:0000250"/>
    <property type="project" value="UniProtKB"/>
</dbReference>
<dbReference type="GO" id="GO:0006611">
    <property type="term" value="P:protein export from nucleus"/>
    <property type="evidence" value="ECO:0000250"/>
    <property type="project" value="UniProtKB"/>
</dbReference>
<dbReference type="GO" id="GO:0050821">
    <property type="term" value="P:protein stabilization"/>
    <property type="evidence" value="ECO:0000250"/>
    <property type="project" value="UniProtKB"/>
</dbReference>
<dbReference type="GO" id="GO:0051453">
    <property type="term" value="P:regulation of intracellular pH"/>
    <property type="evidence" value="ECO:0000250"/>
    <property type="project" value="UniProtKB"/>
</dbReference>
<dbReference type="CDD" id="cd00051">
    <property type="entry name" value="EFh"/>
    <property type="match status" value="1"/>
</dbReference>
<dbReference type="FunFam" id="1.10.238.10:FF:000093">
    <property type="entry name" value="Calcineurin B homologous protein 1"/>
    <property type="match status" value="1"/>
</dbReference>
<dbReference type="Gene3D" id="1.10.238.10">
    <property type="entry name" value="EF-hand"/>
    <property type="match status" value="1"/>
</dbReference>
<dbReference type="InterPro" id="IPR051875">
    <property type="entry name" value="Calcineurin_B_homologous"/>
</dbReference>
<dbReference type="InterPro" id="IPR011992">
    <property type="entry name" value="EF-hand-dom_pair"/>
</dbReference>
<dbReference type="InterPro" id="IPR018247">
    <property type="entry name" value="EF_Hand_1_Ca_BS"/>
</dbReference>
<dbReference type="InterPro" id="IPR002048">
    <property type="entry name" value="EF_hand_dom"/>
</dbReference>
<dbReference type="PANTHER" id="PTHR46002">
    <property type="entry name" value="EG:114D9.1 PROTEIN-RELATED"/>
    <property type="match status" value="1"/>
</dbReference>
<dbReference type="Pfam" id="PF13499">
    <property type="entry name" value="EF-hand_7"/>
    <property type="match status" value="1"/>
</dbReference>
<dbReference type="SMART" id="SM00054">
    <property type="entry name" value="EFh"/>
    <property type="match status" value="2"/>
</dbReference>
<dbReference type="SUPFAM" id="SSF47473">
    <property type="entry name" value="EF-hand"/>
    <property type="match status" value="1"/>
</dbReference>
<dbReference type="PROSITE" id="PS00018">
    <property type="entry name" value="EF_HAND_1"/>
    <property type="match status" value="1"/>
</dbReference>
<dbReference type="PROSITE" id="PS50222">
    <property type="entry name" value="EF_HAND_2"/>
    <property type="match status" value="3"/>
</dbReference>
<name>CHP1_MOUSE</name>
<keyword id="KW-0106">Calcium</keyword>
<keyword id="KW-1003">Cell membrane</keyword>
<keyword id="KW-0963">Cytoplasm</keyword>
<keyword id="KW-0206">Cytoskeleton</keyword>
<keyword id="KW-0256">Endoplasmic reticulum</keyword>
<keyword id="KW-0449">Lipoprotein</keyword>
<keyword id="KW-0472">Membrane</keyword>
<keyword id="KW-0479">Metal-binding</keyword>
<keyword id="KW-0519">Myristate</keyword>
<keyword id="KW-0539">Nucleus</keyword>
<keyword id="KW-0597">Phosphoprotein</keyword>
<keyword id="KW-0649">Protein kinase inhibitor</keyword>
<keyword id="KW-0653">Protein transport</keyword>
<keyword id="KW-1185">Reference proteome</keyword>
<keyword id="KW-0677">Repeat</keyword>
<keyword id="KW-0813">Transport</keyword>
<evidence type="ECO:0000250" key="1"/>
<evidence type="ECO:0000250" key="2">
    <source>
        <dbReference type="UniProtKB" id="P61023"/>
    </source>
</evidence>
<evidence type="ECO:0000250" key="3">
    <source>
        <dbReference type="UniProtKB" id="Q99653"/>
    </source>
</evidence>
<evidence type="ECO:0000255" key="4">
    <source>
        <dbReference type="PROSITE-ProRule" id="PRU00448"/>
    </source>
</evidence>
<evidence type="ECO:0000269" key="5">
    <source>
    </source>
</evidence>
<evidence type="ECO:0000305" key="6"/>
<organism>
    <name type="scientific">Mus musculus</name>
    <name type="common">Mouse</name>
    <dbReference type="NCBI Taxonomy" id="10090"/>
    <lineage>
        <taxon>Eukaryota</taxon>
        <taxon>Metazoa</taxon>
        <taxon>Chordata</taxon>
        <taxon>Craniata</taxon>
        <taxon>Vertebrata</taxon>
        <taxon>Euteleostomi</taxon>
        <taxon>Mammalia</taxon>
        <taxon>Eutheria</taxon>
        <taxon>Euarchontoglires</taxon>
        <taxon>Glires</taxon>
        <taxon>Rodentia</taxon>
        <taxon>Myomorpha</taxon>
        <taxon>Muroidea</taxon>
        <taxon>Muridae</taxon>
        <taxon>Murinae</taxon>
        <taxon>Mus</taxon>
        <taxon>Mus</taxon>
    </lineage>
</organism>
<sequence>MGSRASTLLRDEELEEIKKETGFSHSQITRLYSRFTSLDKGENGTLSREDFQRIPELAINPLGDRIINAFFSEGEDQVNFRGFMRTLAHFRPIEDNEKSKDVNGPEPLNSRSNKLHFAFRLYDLDKDDKISRDELLQVLRMMVGVNISDEQLGSIADRTIQEADQDGDSAISFTEFVKVLEKVDVEQKMSIRFLH</sequence>